<sequence>MIQEQTMLNVADNSGARRVMCIKVLGGSHRRYAGVGDIIKITIKEAIPRGKVKKGDVLKAVVVRTKKGVRRPDGSVIRFDGNACVLLNNNSEQPIGTRIFGPVTRELRSEKFMKIISLAPEVL</sequence>
<keyword id="KW-0687">Ribonucleoprotein</keyword>
<keyword id="KW-0689">Ribosomal protein</keyword>
<keyword id="KW-0694">RNA-binding</keyword>
<keyword id="KW-0699">rRNA-binding</keyword>
<comment type="function">
    <text evidence="1">Binds to 23S rRNA. Forms part of two intersubunit bridges in the 70S ribosome.</text>
</comment>
<comment type="subunit">
    <text evidence="1">Part of the 50S ribosomal subunit. Forms a cluster with proteins L3 and L19. In the 70S ribosome, L14 and L19 interact and together make contacts with the 16S rRNA in bridges B5 and B8.</text>
</comment>
<comment type="similarity">
    <text evidence="1">Belongs to the universal ribosomal protein uL14 family.</text>
</comment>
<protein>
    <recommendedName>
        <fullName evidence="1">Large ribosomal subunit protein uL14</fullName>
    </recommendedName>
    <alternativeName>
        <fullName evidence="2">50S ribosomal protein L14</fullName>
    </alternativeName>
</protein>
<feature type="chain" id="PRO_1000144263" description="Large ribosomal subunit protein uL14">
    <location>
        <begin position="1"/>
        <end position="123"/>
    </location>
</feature>
<evidence type="ECO:0000255" key="1">
    <source>
        <dbReference type="HAMAP-Rule" id="MF_01367"/>
    </source>
</evidence>
<evidence type="ECO:0000305" key="2"/>
<gene>
    <name evidence="1" type="primary">rplN</name>
    <name type="ordered locus">ECH74115_4633</name>
</gene>
<dbReference type="EMBL" id="CP001164">
    <property type="protein sequence ID" value="ACI36392.1"/>
    <property type="molecule type" value="Genomic_DNA"/>
</dbReference>
<dbReference type="RefSeq" id="WP_000613955.1">
    <property type="nucleotide sequence ID" value="NC_011353.1"/>
</dbReference>
<dbReference type="SMR" id="B5YTN1"/>
<dbReference type="GeneID" id="93778677"/>
<dbReference type="KEGG" id="ecf:ECH74115_4633"/>
<dbReference type="HOGENOM" id="CLU_095071_2_1_6"/>
<dbReference type="GO" id="GO:0022625">
    <property type="term" value="C:cytosolic large ribosomal subunit"/>
    <property type="evidence" value="ECO:0007669"/>
    <property type="project" value="TreeGrafter"/>
</dbReference>
<dbReference type="GO" id="GO:0070180">
    <property type="term" value="F:large ribosomal subunit rRNA binding"/>
    <property type="evidence" value="ECO:0007669"/>
    <property type="project" value="TreeGrafter"/>
</dbReference>
<dbReference type="GO" id="GO:0003735">
    <property type="term" value="F:structural constituent of ribosome"/>
    <property type="evidence" value="ECO:0007669"/>
    <property type="project" value="InterPro"/>
</dbReference>
<dbReference type="GO" id="GO:0006412">
    <property type="term" value="P:translation"/>
    <property type="evidence" value="ECO:0007669"/>
    <property type="project" value="UniProtKB-UniRule"/>
</dbReference>
<dbReference type="CDD" id="cd00337">
    <property type="entry name" value="Ribosomal_uL14"/>
    <property type="match status" value="1"/>
</dbReference>
<dbReference type="FunFam" id="2.40.150.20:FF:000001">
    <property type="entry name" value="50S ribosomal protein L14"/>
    <property type="match status" value="1"/>
</dbReference>
<dbReference type="Gene3D" id="2.40.150.20">
    <property type="entry name" value="Ribosomal protein L14"/>
    <property type="match status" value="1"/>
</dbReference>
<dbReference type="HAMAP" id="MF_01367">
    <property type="entry name" value="Ribosomal_uL14"/>
    <property type="match status" value="1"/>
</dbReference>
<dbReference type="InterPro" id="IPR000218">
    <property type="entry name" value="Ribosomal_uL14"/>
</dbReference>
<dbReference type="InterPro" id="IPR005745">
    <property type="entry name" value="Ribosomal_uL14_bac-type"/>
</dbReference>
<dbReference type="InterPro" id="IPR019972">
    <property type="entry name" value="Ribosomal_uL14_CS"/>
</dbReference>
<dbReference type="InterPro" id="IPR036853">
    <property type="entry name" value="Ribosomal_uL14_sf"/>
</dbReference>
<dbReference type="NCBIfam" id="TIGR01067">
    <property type="entry name" value="rplN_bact"/>
    <property type="match status" value="1"/>
</dbReference>
<dbReference type="PANTHER" id="PTHR11761">
    <property type="entry name" value="50S/60S RIBOSOMAL PROTEIN L14/L23"/>
    <property type="match status" value="1"/>
</dbReference>
<dbReference type="PANTHER" id="PTHR11761:SF3">
    <property type="entry name" value="LARGE RIBOSOMAL SUBUNIT PROTEIN UL14M"/>
    <property type="match status" value="1"/>
</dbReference>
<dbReference type="Pfam" id="PF00238">
    <property type="entry name" value="Ribosomal_L14"/>
    <property type="match status" value="1"/>
</dbReference>
<dbReference type="SMART" id="SM01374">
    <property type="entry name" value="Ribosomal_L14"/>
    <property type="match status" value="1"/>
</dbReference>
<dbReference type="SUPFAM" id="SSF50193">
    <property type="entry name" value="Ribosomal protein L14"/>
    <property type="match status" value="1"/>
</dbReference>
<dbReference type="PROSITE" id="PS00049">
    <property type="entry name" value="RIBOSOMAL_L14"/>
    <property type="match status" value="1"/>
</dbReference>
<organism>
    <name type="scientific">Escherichia coli O157:H7 (strain EC4115 / EHEC)</name>
    <dbReference type="NCBI Taxonomy" id="444450"/>
    <lineage>
        <taxon>Bacteria</taxon>
        <taxon>Pseudomonadati</taxon>
        <taxon>Pseudomonadota</taxon>
        <taxon>Gammaproteobacteria</taxon>
        <taxon>Enterobacterales</taxon>
        <taxon>Enterobacteriaceae</taxon>
        <taxon>Escherichia</taxon>
    </lineage>
</organism>
<reference key="1">
    <citation type="journal article" date="2011" name="Proc. Natl. Acad. Sci. U.S.A.">
        <title>Genomic anatomy of Escherichia coli O157:H7 outbreaks.</title>
        <authorList>
            <person name="Eppinger M."/>
            <person name="Mammel M.K."/>
            <person name="Leclerc J.E."/>
            <person name="Ravel J."/>
            <person name="Cebula T.A."/>
        </authorList>
    </citation>
    <scope>NUCLEOTIDE SEQUENCE [LARGE SCALE GENOMIC DNA]</scope>
    <source>
        <strain>EC4115 / EHEC</strain>
    </source>
</reference>
<accession>B5YTN1</accession>
<proteinExistence type="inferred from homology"/>
<name>RL14_ECO5E</name>